<accession>Q0AQJ7</accession>
<sequence>MKFFVDTAETAEIAELAEAGLVDGVTTNPSLIAKSGRNFLEVVKEICDLVEGPVSAEVTALEAPAMIAEGKKLALLADNVVVKLPLTFEGLKACQALTAENIQTNVTLCFSANQGLLAAKAGATYVSPFIGRLDDLGVDGMELIANLRMIFDNYAFDTQILAASIRSADHIQQCALLGADVATAPPSVLKGLVKHQLTDKGLEAFMADWQKTGQSIL</sequence>
<keyword id="KW-0963">Cytoplasm</keyword>
<keyword id="KW-0570">Pentose shunt</keyword>
<keyword id="KW-1185">Reference proteome</keyword>
<keyword id="KW-0704">Schiff base</keyword>
<keyword id="KW-0808">Transferase</keyword>
<feature type="chain" id="PRO_1000060467" description="Probable transaldolase">
    <location>
        <begin position="1"/>
        <end position="217"/>
    </location>
</feature>
<feature type="active site" description="Schiff-base intermediate with substrate" evidence="1">
    <location>
        <position position="83"/>
    </location>
</feature>
<name>TAL_MARMM</name>
<gene>
    <name evidence="1" type="primary">tal</name>
    <name type="ordered locus">Mmar10_1147</name>
</gene>
<reference key="1">
    <citation type="submission" date="2006-08" db="EMBL/GenBank/DDBJ databases">
        <title>Complete sequence of Maricaulis maris MCS10.</title>
        <authorList>
            <consortium name="US DOE Joint Genome Institute"/>
            <person name="Copeland A."/>
            <person name="Lucas S."/>
            <person name="Lapidus A."/>
            <person name="Barry K."/>
            <person name="Detter J.C."/>
            <person name="Glavina del Rio T."/>
            <person name="Hammon N."/>
            <person name="Israni S."/>
            <person name="Dalin E."/>
            <person name="Tice H."/>
            <person name="Pitluck S."/>
            <person name="Saunders E."/>
            <person name="Brettin T."/>
            <person name="Bruce D."/>
            <person name="Han C."/>
            <person name="Tapia R."/>
            <person name="Gilna P."/>
            <person name="Schmutz J."/>
            <person name="Larimer F."/>
            <person name="Land M."/>
            <person name="Hauser L."/>
            <person name="Kyrpides N."/>
            <person name="Mikhailova N."/>
            <person name="Viollier P."/>
            <person name="Stephens C."/>
            <person name="Richardson P."/>
        </authorList>
    </citation>
    <scope>NUCLEOTIDE SEQUENCE [LARGE SCALE GENOMIC DNA]</scope>
    <source>
        <strain>MCS10</strain>
    </source>
</reference>
<comment type="function">
    <text evidence="1">Transaldolase is important for the balance of metabolites in the pentose-phosphate pathway.</text>
</comment>
<comment type="catalytic activity">
    <reaction evidence="1">
        <text>D-sedoheptulose 7-phosphate + D-glyceraldehyde 3-phosphate = D-erythrose 4-phosphate + beta-D-fructose 6-phosphate</text>
        <dbReference type="Rhea" id="RHEA:17053"/>
        <dbReference type="ChEBI" id="CHEBI:16897"/>
        <dbReference type="ChEBI" id="CHEBI:57483"/>
        <dbReference type="ChEBI" id="CHEBI:57634"/>
        <dbReference type="ChEBI" id="CHEBI:59776"/>
        <dbReference type="EC" id="2.2.1.2"/>
    </reaction>
</comment>
<comment type="pathway">
    <text evidence="1">Carbohydrate degradation; pentose phosphate pathway; D-glyceraldehyde 3-phosphate and beta-D-fructose 6-phosphate from D-ribose 5-phosphate and D-xylulose 5-phosphate (non-oxidative stage): step 2/3.</text>
</comment>
<comment type="subcellular location">
    <subcellularLocation>
        <location evidence="1">Cytoplasm</location>
    </subcellularLocation>
</comment>
<comment type="similarity">
    <text evidence="1">Belongs to the transaldolase family. Type 3B subfamily.</text>
</comment>
<evidence type="ECO:0000255" key="1">
    <source>
        <dbReference type="HAMAP-Rule" id="MF_00494"/>
    </source>
</evidence>
<organism>
    <name type="scientific">Maricaulis maris (strain MCS10)</name>
    <name type="common">Caulobacter maris</name>
    <dbReference type="NCBI Taxonomy" id="394221"/>
    <lineage>
        <taxon>Bacteria</taxon>
        <taxon>Pseudomonadati</taxon>
        <taxon>Pseudomonadota</taxon>
        <taxon>Alphaproteobacteria</taxon>
        <taxon>Maricaulales</taxon>
        <taxon>Maricaulaceae</taxon>
        <taxon>Maricaulis</taxon>
    </lineage>
</organism>
<protein>
    <recommendedName>
        <fullName evidence="1">Probable transaldolase</fullName>
        <ecNumber evidence="1">2.2.1.2</ecNumber>
    </recommendedName>
</protein>
<proteinExistence type="inferred from homology"/>
<dbReference type="EC" id="2.2.1.2" evidence="1"/>
<dbReference type="EMBL" id="CP000449">
    <property type="protein sequence ID" value="ABI65440.1"/>
    <property type="molecule type" value="Genomic_DNA"/>
</dbReference>
<dbReference type="RefSeq" id="WP_011643087.1">
    <property type="nucleotide sequence ID" value="NC_008347.1"/>
</dbReference>
<dbReference type="SMR" id="Q0AQJ7"/>
<dbReference type="STRING" id="394221.Mmar10_1147"/>
<dbReference type="KEGG" id="mmr:Mmar10_1147"/>
<dbReference type="eggNOG" id="COG0176">
    <property type="taxonomic scope" value="Bacteria"/>
</dbReference>
<dbReference type="HOGENOM" id="CLU_079764_0_0_5"/>
<dbReference type="OrthoDB" id="9807051at2"/>
<dbReference type="UniPathway" id="UPA00115">
    <property type="reaction ID" value="UER00414"/>
</dbReference>
<dbReference type="Proteomes" id="UP000001964">
    <property type="component" value="Chromosome"/>
</dbReference>
<dbReference type="GO" id="GO:0005737">
    <property type="term" value="C:cytoplasm"/>
    <property type="evidence" value="ECO:0007669"/>
    <property type="project" value="UniProtKB-SubCell"/>
</dbReference>
<dbReference type="GO" id="GO:0016832">
    <property type="term" value="F:aldehyde-lyase activity"/>
    <property type="evidence" value="ECO:0007669"/>
    <property type="project" value="InterPro"/>
</dbReference>
<dbReference type="GO" id="GO:0004801">
    <property type="term" value="F:transaldolase activity"/>
    <property type="evidence" value="ECO:0007669"/>
    <property type="project" value="UniProtKB-UniRule"/>
</dbReference>
<dbReference type="GO" id="GO:0005975">
    <property type="term" value="P:carbohydrate metabolic process"/>
    <property type="evidence" value="ECO:0007669"/>
    <property type="project" value="InterPro"/>
</dbReference>
<dbReference type="GO" id="GO:0006098">
    <property type="term" value="P:pentose-phosphate shunt"/>
    <property type="evidence" value="ECO:0007669"/>
    <property type="project" value="UniProtKB-UniRule"/>
</dbReference>
<dbReference type="CDD" id="cd00956">
    <property type="entry name" value="Transaldolase_FSA"/>
    <property type="match status" value="1"/>
</dbReference>
<dbReference type="FunFam" id="3.20.20.70:FF:000018">
    <property type="entry name" value="Probable transaldolase"/>
    <property type="match status" value="1"/>
</dbReference>
<dbReference type="Gene3D" id="3.20.20.70">
    <property type="entry name" value="Aldolase class I"/>
    <property type="match status" value="1"/>
</dbReference>
<dbReference type="HAMAP" id="MF_00494">
    <property type="entry name" value="Transaldolase_3b"/>
    <property type="match status" value="1"/>
</dbReference>
<dbReference type="InterPro" id="IPR013785">
    <property type="entry name" value="Aldolase_TIM"/>
</dbReference>
<dbReference type="InterPro" id="IPR001585">
    <property type="entry name" value="TAL/FSA"/>
</dbReference>
<dbReference type="InterPro" id="IPR022999">
    <property type="entry name" value="Transaldolase_3B"/>
</dbReference>
<dbReference type="InterPro" id="IPR004731">
    <property type="entry name" value="Transaldolase_3B/F6P_aldolase"/>
</dbReference>
<dbReference type="InterPro" id="IPR018225">
    <property type="entry name" value="Transaldolase_AS"/>
</dbReference>
<dbReference type="InterPro" id="IPR033919">
    <property type="entry name" value="TSA/FSA_arc/bac"/>
</dbReference>
<dbReference type="NCBIfam" id="TIGR00875">
    <property type="entry name" value="fsa_talC_mipB"/>
    <property type="match status" value="1"/>
</dbReference>
<dbReference type="PANTHER" id="PTHR10683:SF40">
    <property type="entry name" value="FRUCTOSE-6-PHOSPHATE ALDOLASE 1-RELATED"/>
    <property type="match status" value="1"/>
</dbReference>
<dbReference type="PANTHER" id="PTHR10683">
    <property type="entry name" value="TRANSALDOLASE"/>
    <property type="match status" value="1"/>
</dbReference>
<dbReference type="Pfam" id="PF00923">
    <property type="entry name" value="TAL_FSA"/>
    <property type="match status" value="1"/>
</dbReference>
<dbReference type="SUPFAM" id="SSF51569">
    <property type="entry name" value="Aldolase"/>
    <property type="match status" value="1"/>
</dbReference>
<dbReference type="PROSITE" id="PS01054">
    <property type="entry name" value="TRANSALDOLASE_1"/>
    <property type="match status" value="1"/>
</dbReference>
<dbReference type="PROSITE" id="PS00958">
    <property type="entry name" value="TRANSALDOLASE_2"/>
    <property type="match status" value="1"/>
</dbReference>